<protein>
    <recommendedName>
        <fullName evidence="1">GTPase Obg</fullName>
        <ecNumber evidence="1">3.6.5.-</ecNumber>
    </recommendedName>
    <alternativeName>
        <fullName evidence="1">GTP-binding protein Obg</fullName>
    </alternativeName>
</protein>
<dbReference type="EC" id="3.6.5.-" evidence="1"/>
<dbReference type="EMBL" id="AL157959">
    <property type="protein sequence ID" value="CAM07645.1"/>
    <property type="molecule type" value="Genomic_DNA"/>
</dbReference>
<dbReference type="PIR" id="F82030">
    <property type="entry name" value="F82030"/>
</dbReference>
<dbReference type="RefSeq" id="WP_002247098.1">
    <property type="nucleotide sequence ID" value="NC_003116.1"/>
</dbReference>
<dbReference type="SMR" id="A1IPH6"/>
<dbReference type="EnsemblBacteria" id="CAM07645">
    <property type="protein sequence ID" value="CAM07645"/>
    <property type="gene ID" value="NMA0345"/>
</dbReference>
<dbReference type="GeneID" id="93387015"/>
<dbReference type="KEGG" id="nma:NMA0345"/>
<dbReference type="HOGENOM" id="CLU_011747_2_0_4"/>
<dbReference type="Proteomes" id="UP000000626">
    <property type="component" value="Chromosome"/>
</dbReference>
<dbReference type="GO" id="GO:0005737">
    <property type="term" value="C:cytoplasm"/>
    <property type="evidence" value="ECO:0007669"/>
    <property type="project" value="UniProtKB-SubCell"/>
</dbReference>
<dbReference type="GO" id="GO:0005525">
    <property type="term" value="F:GTP binding"/>
    <property type="evidence" value="ECO:0007669"/>
    <property type="project" value="UniProtKB-UniRule"/>
</dbReference>
<dbReference type="GO" id="GO:0003924">
    <property type="term" value="F:GTPase activity"/>
    <property type="evidence" value="ECO:0007669"/>
    <property type="project" value="UniProtKB-UniRule"/>
</dbReference>
<dbReference type="GO" id="GO:0000287">
    <property type="term" value="F:magnesium ion binding"/>
    <property type="evidence" value="ECO:0007669"/>
    <property type="project" value="InterPro"/>
</dbReference>
<dbReference type="GO" id="GO:0042254">
    <property type="term" value="P:ribosome biogenesis"/>
    <property type="evidence" value="ECO:0007669"/>
    <property type="project" value="UniProtKB-UniRule"/>
</dbReference>
<dbReference type="CDD" id="cd01898">
    <property type="entry name" value="Obg"/>
    <property type="match status" value="1"/>
</dbReference>
<dbReference type="FunFam" id="2.70.210.12:FF:000001">
    <property type="entry name" value="GTPase Obg"/>
    <property type="match status" value="1"/>
</dbReference>
<dbReference type="FunFam" id="3.40.50.300:FF:000185">
    <property type="entry name" value="GTPase Obg"/>
    <property type="match status" value="1"/>
</dbReference>
<dbReference type="Gene3D" id="2.70.210.12">
    <property type="entry name" value="GTP1/OBG domain"/>
    <property type="match status" value="1"/>
</dbReference>
<dbReference type="Gene3D" id="3.40.50.300">
    <property type="entry name" value="P-loop containing nucleotide triphosphate hydrolases"/>
    <property type="match status" value="1"/>
</dbReference>
<dbReference type="HAMAP" id="MF_01454">
    <property type="entry name" value="GTPase_Obg"/>
    <property type="match status" value="1"/>
</dbReference>
<dbReference type="InterPro" id="IPR031167">
    <property type="entry name" value="G_OBG"/>
</dbReference>
<dbReference type="InterPro" id="IPR006073">
    <property type="entry name" value="GTP-bd"/>
</dbReference>
<dbReference type="InterPro" id="IPR014100">
    <property type="entry name" value="GTP-bd_Obg/CgtA"/>
</dbReference>
<dbReference type="InterPro" id="IPR006074">
    <property type="entry name" value="GTP1-OBG_CS"/>
</dbReference>
<dbReference type="InterPro" id="IPR006169">
    <property type="entry name" value="GTP1_OBG_dom"/>
</dbReference>
<dbReference type="InterPro" id="IPR036726">
    <property type="entry name" value="GTP1_OBG_dom_sf"/>
</dbReference>
<dbReference type="InterPro" id="IPR045086">
    <property type="entry name" value="OBG_GTPase"/>
</dbReference>
<dbReference type="InterPro" id="IPR027417">
    <property type="entry name" value="P-loop_NTPase"/>
</dbReference>
<dbReference type="NCBIfam" id="TIGR02729">
    <property type="entry name" value="Obg_CgtA"/>
    <property type="match status" value="1"/>
</dbReference>
<dbReference type="NCBIfam" id="NF008955">
    <property type="entry name" value="PRK12297.1"/>
    <property type="match status" value="1"/>
</dbReference>
<dbReference type="NCBIfam" id="NF008956">
    <property type="entry name" value="PRK12299.1"/>
    <property type="match status" value="1"/>
</dbReference>
<dbReference type="PANTHER" id="PTHR11702">
    <property type="entry name" value="DEVELOPMENTALLY REGULATED GTP-BINDING PROTEIN-RELATED"/>
    <property type="match status" value="1"/>
</dbReference>
<dbReference type="PANTHER" id="PTHR11702:SF31">
    <property type="entry name" value="MITOCHONDRIAL RIBOSOME-ASSOCIATED GTPASE 2"/>
    <property type="match status" value="1"/>
</dbReference>
<dbReference type="Pfam" id="PF01018">
    <property type="entry name" value="GTP1_OBG"/>
    <property type="match status" value="1"/>
</dbReference>
<dbReference type="Pfam" id="PF01926">
    <property type="entry name" value="MMR_HSR1"/>
    <property type="match status" value="1"/>
</dbReference>
<dbReference type="PIRSF" id="PIRSF002401">
    <property type="entry name" value="GTP_bd_Obg/CgtA"/>
    <property type="match status" value="1"/>
</dbReference>
<dbReference type="PRINTS" id="PR00326">
    <property type="entry name" value="GTP1OBG"/>
</dbReference>
<dbReference type="SUPFAM" id="SSF82051">
    <property type="entry name" value="Obg GTP-binding protein N-terminal domain"/>
    <property type="match status" value="1"/>
</dbReference>
<dbReference type="SUPFAM" id="SSF52540">
    <property type="entry name" value="P-loop containing nucleoside triphosphate hydrolases"/>
    <property type="match status" value="1"/>
</dbReference>
<dbReference type="PROSITE" id="PS51710">
    <property type="entry name" value="G_OBG"/>
    <property type="match status" value="1"/>
</dbReference>
<dbReference type="PROSITE" id="PS00905">
    <property type="entry name" value="GTP1_OBG"/>
    <property type="match status" value="1"/>
</dbReference>
<dbReference type="PROSITE" id="PS51883">
    <property type="entry name" value="OBG"/>
    <property type="match status" value="1"/>
</dbReference>
<proteinExistence type="inferred from homology"/>
<reference key="1">
    <citation type="journal article" date="2000" name="Nature">
        <title>Complete DNA sequence of a serogroup A strain of Neisseria meningitidis Z2491.</title>
        <authorList>
            <person name="Parkhill J."/>
            <person name="Achtman M."/>
            <person name="James K.D."/>
            <person name="Bentley S.D."/>
            <person name="Churcher C.M."/>
            <person name="Klee S.R."/>
            <person name="Morelli G."/>
            <person name="Basham D."/>
            <person name="Brown D."/>
            <person name="Chillingworth T."/>
            <person name="Davies R.M."/>
            <person name="Davis P."/>
            <person name="Devlin K."/>
            <person name="Feltwell T."/>
            <person name="Hamlin N."/>
            <person name="Holroyd S."/>
            <person name="Jagels K."/>
            <person name="Leather S."/>
            <person name="Moule S."/>
            <person name="Mungall K.L."/>
            <person name="Quail M.A."/>
            <person name="Rajandream M.A."/>
            <person name="Rutherford K.M."/>
            <person name="Simmonds M."/>
            <person name="Skelton J."/>
            <person name="Whitehead S."/>
            <person name="Spratt B.G."/>
            <person name="Barrell B.G."/>
        </authorList>
    </citation>
    <scope>NUCLEOTIDE SEQUENCE [LARGE SCALE GENOMIC DNA]</scope>
    <source>
        <strain>DSM 15465 / Z2491</strain>
    </source>
</reference>
<name>OBG_NEIMA</name>
<gene>
    <name evidence="1" type="primary">obg</name>
    <name type="ordered locus">NMA0345</name>
</gene>
<keyword id="KW-0963">Cytoplasm</keyword>
<keyword id="KW-0342">GTP-binding</keyword>
<keyword id="KW-0378">Hydrolase</keyword>
<keyword id="KW-0460">Magnesium</keyword>
<keyword id="KW-0479">Metal-binding</keyword>
<keyword id="KW-0547">Nucleotide-binding</keyword>
<organism>
    <name type="scientific">Neisseria meningitidis serogroup A / serotype 4A (strain DSM 15465 / Z2491)</name>
    <dbReference type="NCBI Taxonomy" id="122587"/>
    <lineage>
        <taxon>Bacteria</taxon>
        <taxon>Pseudomonadati</taxon>
        <taxon>Pseudomonadota</taxon>
        <taxon>Betaproteobacteria</taxon>
        <taxon>Neisseriales</taxon>
        <taxon>Neisseriaceae</taxon>
        <taxon>Neisseria</taxon>
    </lineage>
</organism>
<comment type="function">
    <text evidence="1">An essential GTPase which binds GTP, GDP and possibly (p)ppGpp with moderate affinity, with high nucleotide exchange rates and a fairly low GTP hydrolysis rate. Plays a role in control of the cell cycle, stress response, ribosome biogenesis and in those bacteria that undergo differentiation, in morphogenesis control.</text>
</comment>
<comment type="cofactor">
    <cofactor evidence="1">
        <name>Mg(2+)</name>
        <dbReference type="ChEBI" id="CHEBI:18420"/>
    </cofactor>
</comment>
<comment type="subunit">
    <text evidence="1">Monomer.</text>
</comment>
<comment type="subcellular location">
    <subcellularLocation>
        <location evidence="1">Cytoplasm</location>
    </subcellularLocation>
</comment>
<comment type="similarity">
    <text evidence="1">Belongs to the TRAFAC class OBG-HflX-like GTPase superfamily. OBG GTPase family.</text>
</comment>
<feature type="chain" id="PRO_0000386083" description="GTPase Obg">
    <location>
        <begin position="1"/>
        <end position="384"/>
    </location>
</feature>
<feature type="domain" description="Obg" evidence="2">
    <location>
        <begin position="1"/>
        <end position="159"/>
    </location>
</feature>
<feature type="domain" description="OBG-type G" evidence="1">
    <location>
        <begin position="160"/>
        <end position="348"/>
    </location>
</feature>
<feature type="region of interest" description="Disordered" evidence="3">
    <location>
        <begin position="20"/>
        <end position="46"/>
    </location>
</feature>
<feature type="region of interest" description="Disordered" evidence="3">
    <location>
        <begin position="364"/>
        <end position="384"/>
    </location>
</feature>
<feature type="compositionally biased region" description="Gly residues" evidence="3">
    <location>
        <begin position="33"/>
        <end position="43"/>
    </location>
</feature>
<feature type="binding site" evidence="1">
    <location>
        <begin position="166"/>
        <end position="173"/>
    </location>
    <ligand>
        <name>GTP</name>
        <dbReference type="ChEBI" id="CHEBI:37565"/>
    </ligand>
</feature>
<feature type="binding site" evidence="1">
    <location>
        <position position="173"/>
    </location>
    <ligand>
        <name>Mg(2+)</name>
        <dbReference type="ChEBI" id="CHEBI:18420"/>
    </ligand>
</feature>
<feature type="binding site" evidence="1">
    <location>
        <begin position="191"/>
        <end position="195"/>
    </location>
    <ligand>
        <name>GTP</name>
        <dbReference type="ChEBI" id="CHEBI:37565"/>
    </ligand>
</feature>
<feature type="binding site" evidence="1">
    <location>
        <position position="193"/>
    </location>
    <ligand>
        <name>Mg(2+)</name>
        <dbReference type="ChEBI" id="CHEBI:18420"/>
    </ligand>
</feature>
<feature type="binding site" evidence="1">
    <location>
        <begin position="213"/>
        <end position="216"/>
    </location>
    <ligand>
        <name>GTP</name>
        <dbReference type="ChEBI" id="CHEBI:37565"/>
    </ligand>
</feature>
<feature type="binding site" evidence="1">
    <location>
        <begin position="284"/>
        <end position="287"/>
    </location>
    <ligand>
        <name>GTP</name>
        <dbReference type="ChEBI" id="CHEBI:37565"/>
    </ligand>
</feature>
<feature type="binding site" evidence="1">
    <location>
        <begin position="329"/>
        <end position="331"/>
    </location>
    <ligand>
        <name>GTP</name>
        <dbReference type="ChEBI" id="CHEBI:37565"/>
    </ligand>
</feature>
<evidence type="ECO:0000255" key="1">
    <source>
        <dbReference type="HAMAP-Rule" id="MF_01454"/>
    </source>
</evidence>
<evidence type="ECO:0000255" key="2">
    <source>
        <dbReference type="PROSITE-ProRule" id="PRU01231"/>
    </source>
</evidence>
<evidence type="ECO:0000256" key="3">
    <source>
        <dbReference type="SAM" id="MobiDB-lite"/>
    </source>
</evidence>
<sequence>MKFIDEAKIEVAAGKGGNGATSFRREKFVPRGGPDGGDGGKGGSVWAEADENTNTLVEYRFVKRYQAKNGEKGHGSDRYGAGADDIVLKMPVGTLIRDLDTGENVADLTYHGQRVCLAKGGKGGLGNIHFKSSVNRAPKQSTPGEEGEARSLQLELKVLADVGLLGMPNAGKSTLITAVSAARPKIANYPFTTLHPNLGVVRIDENHSFVMADIPGLIEGAAEGAGLGHRFLKHLSRTGLLLHVVDLAPFDETVNPAEEALAIINELRKYDEELYGKPRWLVLNKLDMLDEEEARARTAAFLEAVGWDYPKPDDRFQFDMETPRLFQISALTHQGTQELVHQINQYLIEKKRIEAEKAEAERAATNVEIAEQQPKTDTGVFKPE</sequence>
<accession>A1IPH6</accession>